<keyword id="KW-0413">Isomerase</keyword>
<keyword id="KW-1185">Reference proteome</keyword>
<keyword id="KW-0819">tRNA processing</keyword>
<dbReference type="EC" id="5.4.99.12" evidence="1"/>
<dbReference type="EMBL" id="AE009948">
    <property type="protein sequence ID" value="AAM99008.1"/>
    <property type="molecule type" value="Genomic_DNA"/>
</dbReference>
<dbReference type="RefSeq" id="NP_687136.1">
    <property type="nucleotide sequence ID" value="NC_004116.1"/>
</dbReference>
<dbReference type="RefSeq" id="WP_000199167.1">
    <property type="nucleotide sequence ID" value="NC_004116.1"/>
</dbReference>
<dbReference type="SMR" id="Q8CX20"/>
<dbReference type="STRING" id="208435.SAG0100"/>
<dbReference type="KEGG" id="sag:SAG0100"/>
<dbReference type="PATRIC" id="fig|208435.3.peg.99"/>
<dbReference type="HOGENOM" id="CLU_014673_0_1_9"/>
<dbReference type="OrthoDB" id="9811823at2"/>
<dbReference type="Proteomes" id="UP000000821">
    <property type="component" value="Chromosome"/>
</dbReference>
<dbReference type="GO" id="GO:0003723">
    <property type="term" value="F:RNA binding"/>
    <property type="evidence" value="ECO:0007669"/>
    <property type="project" value="InterPro"/>
</dbReference>
<dbReference type="GO" id="GO:0160147">
    <property type="term" value="F:tRNA pseudouridine(38-40) synthase activity"/>
    <property type="evidence" value="ECO:0007669"/>
    <property type="project" value="UniProtKB-EC"/>
</dbReference>
<dbReference type="GO" id="GO:0031119">
    <property type="term" value="P:tRNA pseudouridine synthesis"/>
    <property type="evidence" value="ECO:0007669"/>
    <property type="project" value="UniProtKB-UniRule"/>
</dbReference>
<dbReference type="CDD" id="cd02570">
    <property type="entry name" value="PseudoU_synth_EcTruA"/>
    <property type="match status" value="1"/>
</dbReference>
<dbReference type="FunFam" id="3.30.70.580:FF:000001">
    <property type="entry name" value="tRNA pseudouridine synthase A"/>
    <property type="match status" value="1"/>
</dbReference>
<dbReference type="Gene3D" id="3.30.70.660">
    <property type="entry name" value="Pseudouridine synthase I, catalytic domain, C-terminal subdomain"/>
    <property type="match status" value="1"/>
</dbReference>
<dbReference type="Gene3D" id="3.30.70.580">
    <property type="entry name" value="Pseudouridine synthase I, catalytic domain, N-terminal subdomain"/>
    <property type="match status" value="1"/>
</dbReference>
<dbReference type="HAMAP" id="MF_00171">
    <property type="entry name" value="TruA"/>
    <property type="match status" value="1"/>
</dbReference>
<dbReference type="InterPro" id="IPR020103">
    <property type="entry name" value="PsdUridine_synth_cat_dom_sf"/>
</dbReference>
<dbReference type="InterPro" id="IPR001406">
    <property type="entry name" value="PsdUridine_synth_TruA"/>
</dbReference>
<dbReference type="InterPro" id="IPR020097">
    <property type="entry name" value="PsdUridine_synth_TruA_a/b_dom"/>
</dbReference>
<dbReference type="InterPro" id="IPR020095">
    <property type="entry name" value="PsdUridine_synth_TruA_C"/>
</dbReference>
<dbReference type="InterPro" id="IPR020094">
    <property type="entry name" value="TruA/RsuA/RluB/E/F_N"/>
</dbReference>
<dbReference type="NCBIfam" id="TIGR00071">
    <property type="entry name" value="hisT_truA"/>
    <property type="match status" value="1"/>
</dbReference>
<dbReference type="PANTHER" id="PTHR11142">
    <property type="entry name" value="PSEUDOURIDYLATE SYNTHASE"/>
    <property type="match status" value="1"/>
</dbReference>
<dbReference type="PANTHER" id="PTHR11142:SF0">
    <property type="entry name" value="TRNA PSEUDOURIDINE SYNTHASE-LIKE 1"/>
    <property type="match status" value="1"/>
</dbReference>
<dbReference type="Pfam" id="PF01416">
    <property type="entry name" value="PseudoU_synth_1"/>
    <property type="match status" value="2"/>
</dbReference>
<dbReference type="PIRSF" id="PIRSF001430">
    <property type="entry name" value="tRNA_psdUrid_synth"/>
    <property type="match status" value="1"/>
</dbReference>
<dbReference type="SUPFAM" id="SSF55120">
    <property type="entry name" value="Pseudouridine synthase"/>
    <property type="match status" value="1"/>
</dbReference>
<sequence length="258" mass="29372">MTRYKAQISYDGSAFSGFQRQPNCRTVQEEIERTLKRLNSGNDVIIHGAGRTDVGVHAYGQVIHFDLPQARDVEKLRFGLDTQCPDDIDIVKVEQVSDDFHCRYDKHIKTYEFLVDIGRPKNPMMRNYATHYPYPVIIELMQEAIKDLVGTHDFTGFTASGTSVENKVRTIFDAKIQFEASKNLLIFTFTGNGFLYKQVRNMVGTLLKIGNGRMPISQIKTILQAKNRDLAGPTAAGNGLYLKEIIYEDEECFSNFRK</sequence>
<organism>
    <name type="scientific">Streptococcus agalactiae serotype V (strain ATCC BAA-611 / 2603 V/R)</name>
    <dbReference type="NCBI Taxonomy" id="208435"/>
    <lineage>
        <taxon>Bacteria</taxon>
        <taxon>Bacillati</taxon>
        <taxon>Bacillota</taxon>
        <taxon>Bacilli</taxon>
        <taxon>Lactobacillales</taxon>
        <taxon>Streptococcaceae</taxon>
        <taxon>Streptococcus</taxon>
    </lineage>
</organism>
<name>TRUA_STRA5</name>
<protein>
    <recommendedName>
        <fullName evidence="1">tRNA pseudouridine synthase A</fullName>
        <ecNumber evidence="1">5.4.99.12</ecNumber>
    </recommendedName>
    <alternativeName>
        <fullName evidence="1">tRNA pseudouridine(38-40) synthase</fullName>
    </alternativeName>
    <alternativeName>
        <fullName evidence="1">tRNA pseudouridylate synthase I</fullName>
    </alternativeName>
    <alternativeName>
        <fullName evidence="1">tRNA-uridine isomerase I</fullName>
    </alternativeName>
</protein>
<comment type="function">
    <text evidence="1">Formation of pseudouridine at positions 38, 39 and 40 in the anticodon stem and loop of transfer RNAs.</text>
</comment>
<comment type="catalytic activity">
    <reaction evidence="1">
        <text>uridine(38/39/40) in tRNA = pseudouridine(38/39/40) in tRNA</text>
        <dbReference type="Rhea" id="RHEA:22376"/>
        <dbReference type="Rhea" id="RHEA-COMP:10085"/>
        <dbReference type="Rhea" id="RHEA-COMP:10087"/>
        <dbReference type="ChEBI" id="CHEBI:65314"/>
        <dbReference type="ChEBI" id="CHEBI:65315"/>
        <dbReference type="EC" id="5.4.99.12"/>
    </reaction>
</comment>
<comment type="subunit">
    <text evidence="1">Homodimer.</text>
</comment>
<comment type="similarity">
    <text evidence="1">Belongs to the tRNA pseudouridine synthase TruA family.</text>
</comment>
<proteinExistence type="inferred from homology"/>
<evidence type="ECO:0000255" key="1">
    <source>
        <dbReference type="HAMAP-Rule" id="MF_00171"/>
    </source>
</evidence>
<reference key="1">
    <citation type="journal article" date="2002" name="Proc. Natl. Acad. Sci. U.S.A.">
        <title>Complete genome sequence and comparative genomic analysis of an emerging human pathogen, serotype V Streptococcus agalactiae.</title>
        <authorList>
            <person name="Tettelin H."/>
            <person name="Masignani V."/>
            <person name="Cieslewicz M.J."/>
            <person name="Eisen J.A."/>
            <person name="Peterson S.N."/>
            <person name="Wessels M.R."/>
            <person name="Paulsen I.T."/>
            <person name="Nelson K.E."/>
            <person name="Margarit I."/>
            <person name="Read T.D."/>
            <person name="Madoff L.C."/>
            <person name="Wolf A.M."/>
            <person name="Beanan M.J."/>
            <person name="Brinkac L.M."/>
            <person name="Daugherty S.C."/>
            <person name="DeBoy R.T."/>
            <person name="Durkin A.S."/>
            <person name="Kolonay J.F."/>
            <person name="Madupu R."/>
            <person name="Lewis M.R."/>
            <person name="Radune D."/>
            <person name="Fedorova N.B."/>
            <person name="Scanlan D."/>
            <person name="Khouri H.M."/>
            <person name="Mulligan S."/>
            <person name="Carty H.A."/>
            <person name="Cline R.T."/>
            <person name="Van Aken S.E."/>
            <person name="Gill J."/>
            <person name="Scarselli M."/>
            <person name="Mora M."/>
            <person name="Iacobini E.T."/>
            <person name="Brettoni C."/>
            <person name="Galli G."/>
            <person name="Mariani M."/>
            <person name="Vegni F."/>
            <person name="Maione D."/>
            <person name="Rinaudo D."/>
            <person name="Rappuoli R."/>
            <person name="Telford J.L."/>
            <person name="Kasper D.L."/>
            <person name="Grandi G."/>
            <person name="Fraser C.M."/>
        </authorList>
    </citation>
    <scope>NUCLEOTIDE SEQUENCE [LARGE SCALE GENOMIC DNA]</scope>
    <source>
        <strain>ATCC BAA-611 / 2603 V/R</strain>
    </source>
</reference>
<gene>
    <name evidence="1" type="primary">truA</name>
    <name type="ordered locus">SAG0100</name>
</gene>
<feature type="chain" id="PRO_0000057458" description="tRNA pseudouridine synthase A">
    <location>
        <begin position="1"/>
        <end position="258"/>
    </location>
</feature>
<feature type="active site" description="Nucleophile" evidence="1">
    <location>
        <position position="53"/>
    </location>
</feature>
<feature type="binding site" evidence="1">
    <location>
        <position position="111"/>
    </location>
    <ligand>
        <name>substrate</name>
    </ligand>
</feature>
<accession>Q8CX20</accession>